<accession>P81425</accession>
<accession>Q3ZCC2</accession>
<accession>Q8WMG8</accession>
<organism>
    <name type="scientific">Bos taurus</name>
    <name type="common">Bovine</name>
    <dbReference type="NCBI Taxonomy" id="9913"/>
    <lineage>
        <taxon>Eukaryota</taxon>
        <taxon>Metazoa</taxon>
        <taxon>Chordata</taxon>
        <taxon>Craniata</taxon>
        <taxon>Vertebrata</taxon>
        <taxon>Euteleostomi</taxon>
        <taxon>Mammalia</taxon>
        <taxon>Eutheria</taxon>
        <taxon>Laurasiatheria</taxon>
        <taxon>Artiodactyla</taxon>
        <taxon>Ruminantia</taxon>
        <taxon>Pecora</taxon>
        <taxon>Bovidae</taxon>
        <taxon>Bovinae</taxon>
        <taxon>Bos</taxon>
    </lineage>
</organism>
<name>DPP4_BOVIN</name>
<reference key="1">
    <citation type="journal article" date="2002" name="Immunogenetics">
        <title>Molecular characterization of bovine CD26 upregulated by a staphylococcal superantigen.</title>
        <authorList>
            <person name="Lee S.-U."/>
            <person name="Park Y.-H."/>
            <person name="Davis W.C."/>
            <person name="Hamilton M.J."/>
            <person name="Naessens J."/>
            <person name="Bohach G.A."/>
        </authorList>
    </citation>
    <scope>NUCLEOTIDE SEQUENCE [MRNA]</scope>
    <source>
        <tissue>Lymphocyte</tissue>
    </source>
</reference>
<reference key="2">
    <citation type="journal article" date="2002" name="Eur. J. Immunol.">
        <title>CD26 is expressed on a restricted subpopulation of dendritic cells in vivo.</title>
        <authorList>
            <person name="Gliddon D.R."/>
            <person name="Howard C.J."/>
        </authorList>
    </citation>
    <scope>NUCLEOTIDE SEQUENCE [MRNA]</scope>
    <scope>PROTEIN SEQUENCE OF 1-17</scope>
    <source>
        <tissue>Thymus</tissue>
    </source>
</reference>
<reference key="3">
    <citation type="submission" date="2005-08" db="EMBL/GenBank/DDBJ databases">
        <authorList>
            <consortium name="NIH - Mammalian Gene Collection (MGC) project"/>
        </authorList>
    </citation>
    <scope>NUCLEOTIDE SEQUENCE [LARGE SCALE MRNA]</scope>
    <source>
        <strain>Crossbred X Angus</strain>
        <tissue>Ileum</tissue>
    </source>
</reference>
<reference key="4">
    <citation type="journal article" date="2001" name="Infect. Immun.">
        <title>Identity of activation molecule 3 on superantigen-stimulated bovine cells is CD26.</title>
        <authorList>
            <person name="Lee S.-U."/>
            <person name="Ferens W."/>
            <person name="Davis W.C."/>
            <person name="Hamilton M.J."/>
            <person name="Park Y.-H."/>
            <person name="Fox L.K."/>
            <person name="Naessens J."/>
            <person name="Bohach G.A."/>
        </authorList>
    </citation>
    <scope>PROTEIN SEQUENCE OF 1-24</scope>
    <source>
        <tissue>T-cell</tissue>
    </source>
</reference>
<reference key="5">
    <citation type="journal article" date="1998" name="Comp. Biochem. Physiol.">
        <title>The CP-I subunit of adenosine deaminase complexing protein from calf kidney is identical to human, mouse, and rat dipeptidyl peptidase IV.</title>
        <authorList>
            <person name="Ben-Shooshan I."/>
            <person name="Parola A.H."/>
        </authorList>
    </citation>
    <scope>PROTEIN SEQUENCE OF 537-546</scope>
    <source>
        <tissue>Kidney</tissue>
    </source>
</reference>
<comment type="function">
    <text evidence="2">Cell surface glycoprotein receptor involved in the costimulatory signal essential for T-cell receptor (TCR)-mediated T-cell activation. Acts as a positive regulator of T-cell coactivation, by binding at least ADA, CAV1, IGF2R, and PTPRC. Its binding to CAV1 and CARD11 induces T-cell proliferation and NF-kappa-B activation in a T-cell receptor/CD3-dependent manner. Its interaction with ADA also regulates lymphocyte-epithelial cell adhesion. In association with FAP is involved in the pericellular proteolysis of the extracellular matrix (ECM), the migration and invasion of endothelial cells into the ECM. May be involved in the promotion of lymphatic endothelial cells adhesion, migration and tube formation. When overexpressed, enhanced cell proliferation, a process inhibited by GPC3. Also acts as a serine exopeptidase with a dipeptidyl peptidase activity that regulates various physiological processes by cleaving peptides in the circulation, including many chemokines, mitogenic growth factors, neuropeptides and peptide hormones. Removes N-terminal dipeptides sequentially from polypeptides having unsubstituted N-termini provided that the penultimate residue is proline.</text>
</comment>
<comment type="catalytic activity">
    <reaction evidence="2 4">
        <text>Release of an N-terminal dipeptide, Xaa-Yaa-|-Zaa-, from a polypeptide, preferentially when Yaa is Pro, provided Zaa is neither Pro nor hydroxyproline.</text>
        <dbReference type="EC" id="3.4.14.5"/>
    </reaction>
</comment>
<comment type="activity regulation">
    <text evidence="1">Inhibited by GPC3 and diprotin A.</text>
</comment>
<comment type="subunit">
    <text evidence="2">Monomer. Homodimer. Heterodimer with Seprase (FAP). Requires homodimerization for optimal dipeptidyl peptidase activity and T-cell costimulation. Found in a membrane raft complex, at least composed of BCL10, CARD11, DPP4 and IKBKB. Associates with collagen. Interacts with PTPRC; the interaction is enhanced in an interleukin-12-dependent manner in activated lymphocytes. Interacts (via extracellular domain) with ADA; does not inhibit its dipeptidyl peptidase activity. Interacts with CAV1 (via the N-terminus); the interaction is direct. Interacts (via cytoplasmic tail) with CARD11 (via PDZ domain); its homodimerization is necessary for interaction with CARD11. Interacts with IGF2R; the interaction is direct. Interacts with GPC3.</text>
</comment>
<comment type="subcellular location">
    <molecule>Dipeptidyl peptidase 4 soluble form</molecule>
    <subcellularLocation>
        <location>Secreted</location>
    </subcellularLocation>
    <text evidence="1">Detected in the serum and the seminal fluid.</text>
</comment>
<comment type="subcellular location">
    <subcellularLocation>
        <location evidence="1">Cell membrane</location>
        <topology evidence="1">Single-pass type II membrane protein</topology>
    </subcellularLocation>
    <subcellularLocation>
        <location evidence="1">Apical cell membrane</location>
        <topology evidence="1">Single-pass type II membrane protein</topology>
    </subcellularLocation>
    <subcellularLocation>
        <location evidence="1">Cell projection</location>
        <location evidence="1">Invadopodium membrane</location>
        <topology evidence="1">Single-pass type II membrane protein</topology>
    </subcellularLocation>
    <subcellularLocation>
        <location evidence="1">Cell projection</location>
        <location evidence="1">Lamellipodium membrane</location>
        <topology evidence="1">Single-pass type II membrane protein</topology>
    </subcellularLocation>
    <subcellularLocation>
        <location evidence="1">Cell junction</location>
    </subcellularLocation>
    <subcellularLocation>
        <location evidence="1">Membrane raft</location>
    </subcellularLocation>
    <text evidence="1">Translocated to the apical membrane through the concerted action of N- and O-Glycans and its association with lipid microdomains containing cholesterol and sphingolipids. Redistributed to membrane rafts in T-cell in an interleukin-12-dependent activation. Its interaction with CAV1 is necessary for its translocation to membrane rafts. Colocalized with PTPRC in membrane rafts. Colocalized with FAP in invadopodia and lamellipodia of migratory activated endothelial cells in collagenous matrix. Colocalized with FAP on endothelial cells of capillary-like microvessels but not large vessels within invasive breast ductal carcinoma. Colocalized with ADA at the cell junction in lymphocyte-epithelial cell adhesion. Colocalized with IGF2R in internalized cytoplasmic vesicles adjacent to the cell surface (By similarity).</text>
</comment>
<comment type="tissue specificity">
    <text>Intestinal epithelium, dendritic cells and several immune system tissues.</text>
</comment>
<comment type="PTM">
    <text evidence="1">The soluble form (Dipeptidyl peptidase 4 soluble form also named SDPP) derives from the membrane form (Dipeptidyl peptidase 4 membrane form also named MDPP) by proteolytic processing.</text>
</comment>
<comment type="PTM">
    <text evidence="1">N- and O-Glycosylated.</text>
</comment>
<comment type="PTM">
    <text evidence="1">Phosphorylated. Mannose 6-phosphate residues in the carbohydrate moiety are necessary for interaction with IGF2R in activated T-cells. Mannose 6-phosphorylation is induced during T-cell activation (By similarity).</text>
</comment>
<comment type="similarity">
    <text evidence="5">Belongs to the peptidase S9B family. DPPIV subfamily.</text>
</comment>
<sequence>MKTPWKVLLGLLAIAALVTVITVPVVLLTKGNDASTDSRRTYTLADYLKNTFRMKFYNLRWVSDHEYLYKQENNILLFNAEYGNSSIFLENSTFDEFGHSINDYSVSPDRQYILFEYNYVKQWRHSYTASYDIYDLNKRQLITEERIPNNTQWITWSSVGHKLAYVWNNDIYVKNEPNSPSQRITWTGKKDVIYNGITDWVYEEEVFSAYSALWWSPNSTFLAYAQFNDTEVPLIEYSFYSDESLQYPKTVKIPYPKAGAVNPTIKFFVVNISSLSPNINATSQQIVPPGSVLIGDHYLCDVTWVTEERISLQWLRRIQNYSIMDICDYDRSTGRWISSVGRQHIEISTTGWVGRFRPAEPHFTSDGNSFYKIISNEEGYKHICHFQTDKRNCTFITKGAWEVIGIEALTSDYLYYISNEYKGMPGARNLYKIQLNDYTKVTCLSCELNPDRCQYYSVSFSQEAKYYQLRCSGPGLPLYTLHNSNNDKELRVLENNSDLDQVLQDVQMPSKKLDFIHLHGTKFWYQMILPPHFDKSKKYPLLLEVYAGPCSQKADAIFRLNWATYLASTENIIVASFDGRGSGYQGDKIMHAINRRLGTFEVEDQIEATRQFSKMGFVDDKRIAIWGWSYGGYVTSMVLGAGSGVFKCGIAVAPVSKWEYYDSVYTERYMGLPTPEDNLDSYRNSTVMSRAENFKQVEYLLIHGTADDNVHFQQSAQISKALVDAGVDFQSMWYTDEDHGIASSTAHQHIYTHMSHFLKQCFSLL</sequence>
<proteinExistence type="evidence at protein level"/>
<evidence type="ECO:0000250" key="1"/>
<evidence type="ECO:0000250" key="2">
    <source>
        <dbReference type="UniProtKB" id="P27487"/>
    </source>
</evidence>
<evidence type="ECO:0000255" key="3"/>
<evidence type="ECO:0000255" key="4">
    <source>
        <dbReference type="PROSITE-ProRule" id="PRU10084"/>
    </source>
</evidence>
<evidence type="ECO:0000305" key="5"/>
<dbReference type="EC" id="3.4.14.5" evidence="2"/>
<dbReference type="EMBL" id="AF461806">
    <property type="protein sequence ID" value="AAL67836.1"/>
    <property type="molecule type" value="mRNA"/>
</dbReference>
<dbReference type="EMBL" id="AY056834">
    <property type="protein sequence ID" value="AAL23628.1"/>
    <property type="molecule type" value="mRNA"/>
</dbReference>
<dbReference type="EMBL" id="BC102523">
    <property type="protein sequence ID" value="AAI02524.1"/>
    <property type="molecule type" value="mRNA"/>
</dbReference>
<dbReference type="RefSeq" id="NP_776464.1">
    <property type="nucleotide sequence ID" value="NM_174039.3"/>
</dbReference>
<dbReference type="SMR" id="P81425"/>
<dbReference type="FunCoup" id="P81425">
    <property type="interactions" value="511"/>
</dbReference>
<dbReference type="STRING" id="9913.ENSBTAP00000049191"/>
<dbReference type="BindingDB" id="P81425"/>
<dbReference type="ChEMBL" id="CHEMBL2559"/>
<dbReference type="ESTHER" id="bovin-dpp4">
    <property type="family name" value="DPP4N_Peptidase_S9"/>
</dbReference>
<dbReference type="MEROPS" id="S09.003"/>
<dbReference type="GlyCosmos" id="P81425">
    <property type="glycosylation" value="11 sites, No reported glycans"/>
</dbReference>
<dbReference type="GlyGen" id="P81425">
    <property type="glycosylation" value="11 sites"/>
</dbReference>
<dbReference type="PaxDb" id="9913-ENSBTAP00000020379"/>
<dbReference type="GeneID" id="281122"/>
<dbReference type="KEGG" id="bta:281122"/>
<dbReference type="CTD" id="1803"/>
<dbReference type="VEuPathDB" id="HostDB:ENSBTAG00000048246"/>
<dbReference type="eggNOG" id="KOG2100">
    <property type="taxonomic scope" value="Eukaryota"/>
</dbReference>
<dbReference type="InParanoid" id="P81425"/>
<dbReference type="OMA" id="YDVYDIA"/>
<dbReference type="OrthoDB" id="16520at2759"/>
<dbReference type="Reactome" id="R-BTA-381771">
    <property type="pathway name" value="Synthesis, secretion, and inactivation of Glucagon-like Peptide-1 (GLP-1)"/>
</dbReference>
<dbReference type="Reactome" id="R-BTA-400511">
    <property type="pathway name" value="Synthesis, secretion, and inactivation of Glucose-dependent Insulinotropic Polypeptide (GIP)"/>
</dbReference>
<dbReference type="PRO" id="PR:P81425"/>
<dbReference type="Proteomes" id="UP000009136">
    <property type="component" value="Chromosome 2"/>
</dbReference>
<dbReference type="Bgee" id="ENSBTAG00000048246">
    <property type="expression patterns" value="Expressed in thymus and 97 other cell types or tissues"/>
</dbReference>
<dbReference type="GO" id="GO:0070161">
    <property type="term" value="C:anchoring junction"/>
    <property type="evidence" value="ECO:0007669"/>
    <property type="project" value="UniProtKB-SubCell"/>
</dbReference>
<dbReference type="GO" id="GO:0016324">
    <property type="term" value="C:apical plasma membrane"/>
    <property type="evidence" value="ECO:0007669"/>
    <property type="project" value="UniProtKB-SubCell"/>
</dbReference>
<dbReference type="GO" id="GO:0009986">
    <property type="term" value="C:cell surface"/>
    <property type="evidence" value="ECO:0000250"/>
    <property type="project" value="UniProtKB"/>
</dbReference>
<dbReference type="GO" id="GO:0030139">
    <property type="term" value="C:endocytic vesicle"/>
    <property type="evidence" value="ECO:0000250"/>
    <property type="project" value="UniProtKB"/>
</dbReference>
<dbReference type="GO" id="GO:0005576">
    <property type="term" value="C:extracellular region"/>
    <property type="evidence" value="ECO:0007669"/>
    <property type="project" value="UniProtKB-SubCell"/>
</dbReference>
<dbReference type="GO" id="GO:0030027">
    <property type="term" value="C:lamellipodium"/>
    <property type="evidence" value="ECO:0000250"/>
    <property type="project" value="UniProtKB"/>
</dbReference>
<dbReference type="GO" id="GO:0031258">
    <property type="term" value="C:lamellipodium membrane"/>
    <property type="evidence" value="ECO:0007669"/>
    <property type="project" value="UniProtKB-SubCell"/>
</dbReference>
<dbReference type="GO" id="GO:0045121">
    <property type="term" value="C:membrane raft"/>
    <property type="evidence" value="ECO:0007669"/>
    <property type="project" value="UniProtKB-SubCell"/>
</dbReference>
<dbReference type="GO" id="GO:0005886">
    <property type="term" value="C:plasma membrane"/>
    <property type="evidence" value="ECO:0000318"/>
    <property type="project" value="GO_Central"/>
</dbReference>
<dbReference type="GO" id="GO:0004177">
    <property type="term" value="F:aminopeptidase activity"/>
    <property type="evidence" value="ECO:0007669"/>
    <property type="project" value="UniProtKB-KW"/>
</dbReference>
<dbReference type="GO" id="GO:0008239">
    <property type="term" value="F:dipeptidyl-peptidase activity"/>
    <property type="evidence" value="ECO:0000250"/>
    <property type="project" value="UniProtKB"/>
</dbReference>
<dbReference type="GO" id="GO:0002020">
    <property type="term" value="F:protease binding"/>
    <property type="evidence" value="ECO:0000250"/>
    <property type="project" value="UniProtKB"/>
</dbReference>
<dbReference type="GO" id="GO:0042803">
    <property type="term" value="F:protein homodimerization activity"/>
    <property type="evidence" value="ECO:0000250"/>
    <property type="project" value="UniProtKB"/>
</dbReference>
<dbReference type="GO" id="GO:0004252">
    <property type="term" value="F:serine-type endopeptidase activity"/>
    <property type="evidence" value="ECO:0007669"/>
    <property type="project" value="InterPro"/>
</dbReference>
<dbReference type="GO" id="GO:0005102">
    <property type="term" value="F:signaling receptor binding"/>
    <property type="evidence" value="ECO:0000250"/>
    <property type="project" value="UniProtKB"/>
</dbReference>
<dbReference type="GO" id="GO:0007155">
    <property type="term" value="P:cell adhesion"/>
    <property type="evidence" value="ECO:0007669"/>
    <property type="project" value="UniProtKB-KW"/>
</dbReference>
<dbReference type="GO" id="GO:0043542">
    <property type="term" value="P:endothelial cell migration"/>
    <property type="evidence" value="ECO:0000250"/>
    <property type="project" value="UniProtKB"/>
</dbReference>
<dbReference type="GO" id="GO:0010716">
    <property type="term" value="P:negative regulation of extracellular matrix disassembly"/>
    <property type="evidence" value="ECO:0000250"/>
    <property type="project" value="UniProtKB"/>
</dbReference>
<dbReference type="GO" id="GO:0008284">
    <property type="term" value="P:positive regulation of cell population proliferation"/>
    <property type="evidence" value="ECO:0000250"/>
    <property type="project" value="UniProtKB"/>
</dbReference>
<dbReference type="GO" id="GO:0006508">
    <property type="term" value="P:proteolysis"/>
    <property type="evidence" value="ECO:0000318"/>
    <property type="project" value="GO_Central"/>
</dbReference>
<dbReference type="GO" id="GO:0031295">
    <property type="term" value="P:T cell costimulation"/>
    <property type="evidence" value="ECO:0000250"/>
    <property type="project" value="UniProtKB"/>
</dbReference>
<dbReference type="FunFam" id="2.140.10.30:FF:000001">
    <property type="entry name" value="Dipeptidyl peptidase 4"/>
    <property type="match status" value="1"/>
</dbReference>
<dbReference type="FunFam" id="3.40.50.1820:FF:000003">
    <property type="entry name" value="Dipeptidyl peptidase 4"/>
    <property type="match status" value="1"/>
</dbReference>
<dbReference type="Gene3D" id="3.40.50.1820">
    <property type="entry name" value="alpha/beta hydrolase"/>
    <property type="match status" value="1"/>
</dbReference>
<dbReference type="Gene3D" id="2.140.10.30">
    <property type="entry name" value="Dipeptidylpeptidase IV, N-terminal domain"/>
    <property type="match status" value="1"/>
</dbReference>
<dbReference type="InterPro" id="IPR029058">
    <property type="entry name" value="AB_hydrolase_fold"/>
</dbReference>
<dbReference type="InterPro" id="IPR040522">
    <property type="entry name" value="DPPIV_rep"/>
</dbReference>
<dbReference type="InterPro" id="IPR002471">
    <property type="entry name" value="Pept_S9_AS"/>
</dbReference>
<dbReference type="InterPro" id="IPR001375">
    <property type="entry name" value="Peptidase_S9_cat"/>
</dbReference>
<dbReference type="InterPro" id="IPR002469">
    <property type="entry name" value="Peptidase_S9B_N"/>
</dbReference>
<dbReference type="InterPro" id="IPR050278">
    <property type="entry name" value="Serine_Prot_S9B/DPPIV"/>
</dbReference>
<dbReference type="PANTHER" id="PTHR11731:SF128">
    <property type="entry name" value="DIPEPTIDYL PEPTIDASE 4"/>
    <property type="match status" value="1"/>
</dbReference>
<dbReference type="PANTHER" id="PTHR11731">
    <property type="entry name" value="PROTEASE FAMILY S9B,C DIPEPTIDYL-PEPTIDASE IV-RELATED"/>
    <property type="match status" value="1"/>
</dbReference>
<dbReference type="Pfam" id="PF00930">
    <property type="entry name" value="DPPIV_N"/>
    <property type="match status" value="1"/>
</dbReference>
<dbReference type="Pfam" id="PF18811">
    <property type="entry name" value="DPPIV_rep"/>
    <property type="match status" value="1"/>
</dbReference>
<dbReference type="Pfam" id="PF00326">
    <property type="entry name" value="Peptidase_S9"/>
    <property type="match status" value="1"/>
</dbReference>
<dbReference type="SUPFAM" id="SSF53474">
    <property type="entry name" value="alpha/beta-Hydrolases"/>
    <property type="match status" value="1"/>
</dbReference>
<dbReference type="SUPFAM" id="SSF82171">
    <property type="entry name" value="DPP6 N-terminal domain-like"/>
    <property type="match status" value="1"/>
</dbReference>
<dbReference type="PROSITE" id="PS00708">
    <property type="entry name" value="PRO_ENDOPEP_SER"/>
    <property type="match status" value="1"/>
</dbReference>
<feature type="chain" id="PRO_0000027209" description="Dipeptidyl peptidase 4 membrane form">
    <location>
        <begin position="1"/>
        <end position="765"/>
    </location>
</feature>
<feature type="chain" id="PRO_0000027210" description="Dipeptidyl peptidase 4 soluble form" evidence="1">
    <location>
        <begin position="38"/>
        <end position="765"/>
    </location>
</feature>
<feature type="topological domain" description="Cytoplasmic" evidence="3">
    <location>
        <begin position="1"/>
        <end position="6"/>
    </location>
</feature>
<feature type="transmembrane region" description="Helical; Signal-anchor for type II membrane protein" evidence="3">
    <location>
        <begin position="7"/>
        <end position="29"/>
    </location>
</feature>
<feature type="topological domain" description="Extracellular" evidence="3">
    <location>
        <begin position="30"/>
        <end position="765"/>
    </location>
</feature>
<feature type="active site" description="Charge relay system" evidence="4">
    <location>
        <position position="629"/>
    </location>
</feature>
<feature type="active site" description="Charge relay system" evidence="4">
    <location>
        <position position="707"/>
    </location>
</feature>
<feature type="active site" description="Charge relay system" evidence="4">
    <location>
        <position position="739"/>
    </location>
</feature>
<feature type="glycosylation site" description="N-linked (GlcNAc...) asparagine" evidence="1">
    <location>
        <position position="84"/>
    </location>
</feature>
<feature type="glycosylation site" description="N-linked (GlcNAc...) asparagine" evidence="1">
    <location>
        <position position="91"/>
    </location>
</feature>
<feature type="glycosylation site" description="N-linked (GlcNAc...) asparagine" evidence="3">
    <location>
        <position position="149"/>
    </location>
</feature>
<feature type="glycosylation site" description="N-linked (GlcNAc...) asparagine" evidence="1">
    <location>
        <position position="218"/>
    </location>
</feature>
<feature type="glycosylation site" description="N-linked (GlcNAc...) asparagine" evidence="1">
    <location>
        <position position="228"/>
    </location>
</feature>
<feature type="glycosylation site" description="N-linked (GlcNAc...) asparagine" evidence="3">
    <location>
        <position position="271"/>
    </location>
</feature>
<feature type="glycosylation site" description="N-linked (GlcNAc...) asparagine" evidence="1">
    <location>
        <position position="280"/>
    </location>
</feature>
<feature type="glycosylation site" description="N-linked (GlcNAc...) asparagine" evidence="1">
    <location>
        <position position="320"/>
    </location>
</feature>
<feature type="glycosylation site" description="N-linked (GlcNAc...) asparagine" evidence="3">
    <location>
        <position position="392"/>
    </location>
</feature>
<feature type="glycosylation site" description="N-linked (GlcNAc...) asparagine" evidence="3">
    <location>
        <position position="495"/>
    </location>
</feature>
<feature type="glycosylation site" description="N-linked (GlcNAc...) asparagine" evidence="1">
    <location>
        <position position="684"/>
    </location>
</feature>
<feature type="disulfide bond" evidence="1">
    <location>
        <begin position="384"/>
        <end position="393"/>
    </location>
</feature>
<feature type="disulfide bond" evidence="1">
    <location>
        <begin position="443"/>
        <end position="446"/>
    </location>
</feature>
<feature type="disulfide bond" evidence="1">
    <location>
        <begin position="453"/>
        <end position="471"/>
    </location>
</feature>
<feature type="disulfide bond" evidence="1">
    <location>
        <begin position="648"/>
        <end position="761"/>
    </location>
</feature>
<gene>
    <name type="primary">DPP4</name>
    <name type="synonym">CD26</name>
</gene>
<keyword id="KW-0031">Aminopeptidase</keyword>
<keyword id="KW-0130">Cell adhesion</keyword>
<keyword id="KW-0965">Cell junction</keyword>
<keyword id="KW-1003">Cell membrane</keyword>
<keyword id="KW-0966">Cell projection</keyword>
<keyword id="KW-0903">Direct protein sequencing</keyword>
<keyword id="KW-1015">Disulfide bond</keyword>
<keyword id="KW-0325">Glycoprotein</keyword>
<keyword id="KW-0378">Hydrolase</keyword>
<keyword id="KW-0472">Membrane</keyword>
<keyword id="KW-0645">Protease</keyword>
<keyword id="KW-0675">Receptor</keyword>
<keyword id="KW-1185">Reference proteome</keyword>
<keyword id="KW-0964">Secreted</keyword>
<keyword id="KW-0720">Serine protease</keyword>
<keyword id="KW-0735">Signal-anchor</keyword>
<keyword id="KW-0812">Transmembrane</keyword>
<keyword id="KW-1133">Transmembrane helix</keyword>
<protein>
    <recommendedName>
        <fullName>Dipeptidyl peptidase 4</fullName>
        <ecNumber evidence="2">3.4.14.5</ecNumber>
    </recommendedName>
    <alternativeName>
        <fullName>Activation molecule 3</fullName>
        <shortName>ACT3</shortName>
    </alternativeName>
    <alternativeName>
        <fullName>Adenosine deaminase complexing protein</fullName>
        <shortName>ADCP-I</shortName>
    </alternativeName>
    <alternativeName>
        <fullName>Dipeptidyl peptidase IV</fullName>
        <shortName>DPP IV</shortName>
    </alternativeName>
    <alternativeName>
        <fullName>T-cell activation antigen CD26</fullName>
    </alternativeName>
    <alternativeName>
        <fullName>WC10</fullName>
    </alternativeName>
    <cdAntigenName>CD26</cdAntigenName>
    <component>
        <recommendedName>
            <fullName>Dipeptidyl peptidase 4 membrane form</fullName>
        </recommendedName>
        <alternativeName>
            <fullName>Dipeptidyl peptidase IV membrane form</fullName>
        </alternativeName>
    </component>
    <component>
        <recommendedName>
            <fullName>Dipeptidyl peptidase 4 soluble form</fullName>
        </recommendedName>
        <alternativeName>
            <fullName>Dipeptidyl peptidase IV soluble form</fullName>
        </alternativeName>
    </component>
</protein>